<accession>O55227</accession>
<evidence type="ECO:0000250" key="1"/>
<evidence type="ECO:0000250" key="2">
    <source>
        <dbReference type="UniProtKB" id="Q53HI1"/>
    </source>
</evidence>
<evidence type="ECO:0000255" key="3"/>
<evidence type="ECO:0000269" key="4">
    <source>
    </source>
</evidence>
<evidence type="ECO:0000269" key="5">
    <source>
    </source>
</evidence>
<evidence type="ECO:0000305" key="6"/>
<protein>
    <recommendedName>
        <fullName>Protein unc-50 homolog</fullName>
    </recommendedName>
    <alternativeName>
        <fullName>Uncoordinated-like protein</fullName>
    </alternativeName>
</protein>
<gene>
    <name type="primary">Unc50</name>
    <name type="synonym">Uncl</name>
</gene>
<keyword id="KW-0007">Acetylation</keyword>
<keyword id="KW-0333">Golgi apparatus</keyword>
<keyword id="KW-0472">Membrane</keyword>
<keyword id="KW-0539">Nucleus</keyword>
<keyword id="KW-0597">Phosphoprotein</keyword>
<keyword id="KW-1185">Reference proteome</keyword>
<keyword id="KW-0694">RNA-binding</keyword>
<keyword id="KW-0812">Transmembrane</keyword>
<keyword id="KW-1133">Transmembrane helix</keyword>
<sequence>MLPSTSLNSSMYGNGALNSRDAARHTAGAKRYKYLRRLFRFRQMDFEFAAWQMLYLFTSPQRVYRNFHYRKQTKDQWARDDPAFLVLLSIWLCVSTIGFGFVLDMGFFETIKLLLWVVFIDCVGVGLLISTLMWFISNKYLVKRQSRDYDVEWGYAFDVHLNAFYPLLVILHFIQLFFINHVILTDTFIGYLVGNTLWLIAVGYYIYVTFLGYSALPFLKNTVVLLYPFAPLIVLYGLSLALGWNFTHTLCSFYKYRVK</sequence>
<proteinExistence type="evidence at protein level"/>
<name>UNC50_RAT</name>
<dbReference type="EMBL" id="U96638">
    <property type="protein sequence ID" value="AAB93932.1"/>
    <property type="molecule type" value="mRNA"/>
</dbReference>
<dbReference type="EMBL" id="AY017209">
    <property type="protein sequence ID" value="AAK08985.1"/>
    <property type="molecule type" value="mRNA"/>
</dbReference>
<dbReference type="EMBL" id="BC061976">
    <property type="protein sequence ID" value="AAH61976.1"/>
    <property type="molecule type" value="mRNA"/>
</dbReference>
<dbReference type="RefSeq" id="NP_620274.1">
    <property type="nucleotide sequence ID" value="NM_138919.3"/>
</dbReference>
<dbReference type="RefSeq" id="XP_006244798.1">
    <property type="nucleotide sequence ID" value="XM_006244736.5"/>
</dbReference>
<dbReference type="RefSeq" id="XP_006244799.1">
    <property type="nucleotide sequence ID" value="XM_006244737.5"/>
</dbReference>
<dbReference type="FunCoup" id="O55227">
    <property type="interactions" value="3835"/>
</dbReference>
<dbReference type="STRING" id="10116.ENSRNOP00000024582"/>
<dbReference type="PhosphoSitePlus" id="O55227"/>
<dbReference type="PaxDb" id="10116-ENSRNOP00000024582"/>
<dbReference type="Ensembl" id="ENSRNOT00000024582.5">
    <property type="protein sequence ID" value="ENSRNOP00000024582.2"/>
    <property type="gene ID" value="ENSRNOG00000018128.5"/>
</dbReference>
<dbReference type="GeneID" id="192356"/>
<dbReference type="KEGG" id="rno:192356"/>
<dbReference type="UCSC" id="RGD:621749">
    <property type="organism name" value="rat"/>
</dbReference>
<dbReference type="AGR" id="RGD:621749"/>
<dbReference type="CTD" id="25972"/>
<dbReference type="RGD" id="621749">
    <property type="gene designation" value="Unc50"/>
</dbReference>
<dbReference type="eggNOG" id="KOG3012">
    <property type="taxonomic scope" value="Eukaryota"/>
</dbReference>
<dbReference type="GeneTree" id="ENSGT00390000018553"/>
<dbReference type="HOGENOM" id="CLU_066239_0_0_1"/>
<dbReference type="InParanoid" id="O55227"/>
<dbReference type="OMA" id="YRNFMYR"/>
<dbReference type="OrthoDB" id="10027013at2759"/>
<dbReference type="PhylomeDB" id="O55227"/>
<dbReference type="TreeFam" id="TF105624"/>
<dbReference type="PRO" id="PR:O55227"/>
<dbReference type="Proteomes" id="UP000002494">
    <property type="component" value="Chromosome 9"/>
</dbReference>
<dbReference type="Bgee" id="ENSRNOG00000018128">
    <property type="expression patterns" value="Expressed in stomach and 20 other cell types or tissues"/>
</dbReference>
<dbReference type="GO" id="GO:0005794">
    <property type="term" value="C:Golgi apparatus"/>
    <property type="evidence" value="ECO:0000266"/>
    <property type="project" value="RGD"/>
</dbReference>
<dbReference type="GO" id="GO:0000139">
    <property type="term" value="C:Golgi membrane"/>
    <property type="evidence" value="ECO:0000318"/>
    <property type="project" value="GO_Central"/>
</dbReference>
<dbReference type="GO" id="GO:0005637">
    <property type="term" value="C:nuclear inner membrane"/>
    <property type="evidence" value="ECO:0000314"/>
    <property type="project" value="UniProtKB"/>
</dbReference>
<dbReference type="GO" id="GO:0003723">
    <property type="term" value="F:RNA binding"/>
    <property type="evidence" value="ECO:0000314"/>
    <property type="project" value="RGD"/>
</dbReference>
<dbReference type="GO" id="GO:0034394">
    <property type="term" value="P:protein localization to cell surface"/>
    <property type="evidence" value="ECO:0000314"/>
    <property type="project" value="UniProtKB"/>
</dbReference>
<dbReference type="InterPro" id="IPR007881">
    <property type="entry name" value="UNC-50"/>
</dbReference>
<dbReference type="PANTHER" id="PTHR12841">
    <property type="entry name" value="PROTEIN UNC-50 HOMOLOG"/>
    <property type="match status" value="1"/>
</dbReference>
<dbReference type="PANTHER" id="PTHR12841:SF6">
    <property type="entry name" value="PROTEIN UNC-50 HOMOLOG"/>
    <property type="match status" value="1"/>
</dbReference>
<dbReference type="Pfam" id="PF05216">
    <property type="entry name" value="UNC-50"/>
    <property type="match status" value="1"/>
</dbReference>
<feature type="chain" id="PRO_0000308963" description="Protein unc-50 homolog">
    <location>
        <begin position="1"/>
        <end position="259"/>
    </location>
</feature>
<feature type="topological domain" description="Cytoplasmic" evidence="3">
    <location>
        <begin position="1"/>
        <end position="82"/>
    </location>
</feature>
<feature type="transmembrane region" description="Helical" evidence="3">
    <location>
        <begin position="83"/>
        <end position="103"/>
    </location>
</feature>
<feature type="topological domain" description="Lumenal" evidence="3">
    <location>
        <begin position="104"/>
        <end position="115"/>
    </location>
</feature>
<feature type="transmembrane region" description="Helical" evidence="3">
    <location>
        <begin position="116"/>
        <end position="136"/>
    </location>
</feature>
<feature type="topological domain" description="Cytoplasmic" evidence="3">
    <location>
        <begin position="137"/>
        <end position="163"/>
    </location>
</feature>
<feature type="transmembrane region" description="Helical" evidence="3">
    <location>
        <begin position="164"/>
        <end position="184"/>
    </location>
</feature>
<feature type="topological domain" description="Lumenal" evidence="3">
    <location>
        <begin position="185"/>
        <end position="187"/>
    </location>
</feature>
<feature type="transmembrane region" description="Helical" evidence="3">
    <location>
        <begin position="188"/>
        <end position="208"/>
    </location>
</feature>
<feature type="topological domain" description="Cytoplasmic" evidence="3">
    <location>
        <begin position="209"/>
        <end position="222"/>
    </location>
</feature>
<feature type="transmembrane region" description="Helical" evidence="3">
    <location>
        <begin position="223"/>
        <end position="243"/>
    </location>
</feature>
<feature type="topological domain" description="Lumenal" evidence="3">
    <location>
        <begin position="244"/>
        <end position="259"/>
    </location>
</feature>
<feature type="modified residue" description="N-acetylmethionine" evidence="2">
    <location>
        <position position="1"/>
    </location>
</feature>
<feature type="modified residue" description="Phosphoserine" evidence="2">
    <location>
        <position position="6"/>
    </location>
</feature>
<organism>
    <name type="scientific">Rattus norvegicus</name>
    <name type="common">Rat</name>
    <dbReference type="NCBI Taxonomy" id="10116"/>
    <lineage>
        <taxon>Eukaryota</taxon>
        <taxon>Metazoa</taxon>
        <taxon>Chordata</taxon>
        <taxon>Craniata</taxon>
        <taxon>Vertebrata</taxon>
        <taxon>Euteleostomi</taxon>
        <taxon>Mammalia</taxon>
        <taxon>Eutheria</taxon>
        <taxon>Euarchontoglires</taxon>
        <taxon>Glires</taxon>
        <taxon>Rodentia</taxon>
        <taxon>Myomorpha</taxon>
        <taxon>Muroidea</taxon>
        <taxon>Muridae</taxon>
        <taxon>Murinae</taxon>
        <taxon>Rattus</taxon>
    </lineage>
</organism>
<reference key="1">
    <citation type="journal article" date="2000" name="Brain Res.">
        <title>UNCL, the mammalian homologue of UNC-50, is an inner nuclear membrane RNA-binding protein.</title>
        <authorList>
            <person name="Fitzgerald J."/>
            <person name="Kennedy D."/>
            <person name="Viseshakul N."/>
            <person name="Cohen B.N."/>
            <person name="Mattick J."/>
            <person name="Bateman J.F."/>
            <person name="Forsayeth J.R."/>
        </authorList>
    </citation>
    <scope>NUCLEOTIDE SEQUENCE [MRNA]</scope>
    <scope>FUNCTION</scope>
    <scope>TISSUE SPECIFICITY</scope>
    <scope>SUBCELLULAR LOCATION</scope>
    <scope>RNA-BINDING</scope>
</reference>
<reference key="2">
    <citation type="submission" date="2001-01" db="EMBL/GenBank/DDBJ databases">
        <authorList>
            <person name="Yu L."/>
        </authorList>
    </citation>
    <scope>NUCLEOTIDE SEQUENCE [MRNA]</scope>
</reference>
<reference key="3">
    <citation type="journal article" date="2004" name="Genome Res.">
        <title>The status, quality, and expansion of the NIH full-length cDNA project: the Mammalian Gene Collection (MGC).</title>
        <authorList>
            <consortium name="The MGC Project Team"/>
        </authorList>
    </citation>
    <scope>NUCLEOTIDE SEQUENCE [LARGE SCALE MRNA]</scope>
    <source>
        <tissue>Prostate</tissue>
    </source>
</reference>
<reference key="4">
    <citation type="journal article" date="2007" name="Cell Tissue Res.">
        <title>Expression of UNCL during development of periodontal tissue and response of periodontal ligament fibroblasts to mechanical stress in vivo and in vitro.</title>
        <authorList>
            <person name="Kim H.-J."/>
            <person name="Choi Y.S."/>
            <person name="Jeong M.-J."/>
            <person name="Kim B.-O."/>
            <person name="Lim S.-H."/>
            <person name="Kim D.K."/>
            <person name="Kim C.K."/>
            <person name="Park J.-C."/>
        </authorList>
    </citation>
    <scope>DEVELOPMENTAL STAGE</scope>
    <scope>INDUCTION</scope>
</reference>
<comment type="function">
    <text evidence="4">Involved in the cell surface expression of neuronal nicotinic receptors (PubMed:10980252). Binds RNA (PubMed:10980252).</text>
</comment>
<comment type="subcellular location">
    <subcellularLocation>
        <location evidence="4">Nucleus inner membrane</location>
        <topology evidence="4">Multi-pass membrane protein</topology>
    </subcellularLocation>
    <subcellularLocation>
        <location evidence="2">Golgi apparatus membrane</location>
        <topology evidence="1">Multi-pass membrane protein</topology>
    </subcellularLocation>
</comment>
<comment type="tissue specificity">
    <text evidence="4">Expressed in brain, kidney and testis, and at lower levels in heart.</text>
</comment>
<comment type="developmental stage">
    <text evidence="5">Not present in the maxillary first molar tooth before 18 dpc. Present at high levels in ameloblasts and adjacent cells at P7. At P14, present in differentiating pre-cementoblasts and pre-osteoblasts along the developing root surface and alveolar bone. At P28, present in cementoblastic cells in the periodontal ligament and osteoblastic cells on the alveolar bone surface (at protein level).</text>
</comment>
<comment type="induction">
    <text evidence="5">By mechanical tensile force in periodontal ligament fibroblasts.</text>
</comment>
<comment type="similarity">
    <text evidence="6">Belongs to the unc-50 family.</text>
</comment>